<dbReference type="EC" id="2.3.1.180" evidence="1"/>
<dbReference type="EMBL" id="CP000628">
    <property type="protein sequence ID" value="ACM26126.1"/>
    <property type="molecule type" value="Genomic_DNA"/>
</dbReference>
<dbReference type="RefSeq" id="WP_007692774.1">
    <property type="nucleotide sequence ID" value="NC_011985.1"/>
</dbReference>
<dbReference type="SMR" id="B9JCY9"/>
<dbReference type="STRING" id="311403.Arad_1772"/>
<dbReference type="KEGG" id="ara:Arad_1772"/>
<dbReference type="eggNOG" id="COG0332">
    <property type="taxonomic scope" value="Bacteria"/>
</dbReference>
<dbReference type="HOGENOM" id="CLU_039592_3_1_5"/>
<dbReference type="UniPathway" id="UPA00094"/>
<dbReference type="Proteomes" id="UP000001600">
    <property type="component" value="Chromosome 1"/>
</dbReference>
<dbReference type="GO" id="GO:0005737">
    <property type="term" value="C:cytoplasm"/>
    <property type="evidence" value="ECO:0007669"/>
    <property type="project" value="UniProtKB-SubCell"/>
</dbReference>
<dbReference type="GO" id="GO:0004315">
    <property type="term" value="F:3-oxoacyl-[acyl-carrier-protein] synthase activity"/>
    <property type="evidence" value="ECO:0007669"/>
    <property type="project" value="InterPro"/>
</dbReference>
<dbReference type="GO" id="GO:0033818">
    <property type="term" value="F:beta-ketoacyl-acyl-carrier-protein synthase III activity"/>
    <property type="evidence" value="ECO:0007669"/>
    <property type="project" value="UniProtKB-UniRule"/>
</dbReference>
<dbReference type="GO" id="GO:0006633">
    <property type="term" value="P:fatty acid biosynthetic process"/>
    <property type="evidence" value="ECO:0007669"/>
    <property type="project" value="UniProtKB-UniRule"/>
</dbReference>
<dbReference type="CDD" id="cd00830">
    <property type="entry name" value="KAS_III"/>
    <property type="match status" value="1"/>
</dbReference>
<dbReference type="FunFam" id="3.40.47.10:FF:000004">
    <property type="entry name" value="3-oxoacyl-[acyl-carrier-protein] synthase 3"/>
    <property type="match status" value="1"/>
</dbReference>
<dbReference type="Gene3D" id="3.40.47.10">
    <property type="match status" value="1"/>
</dbReference>
<dbReference type="HAMAP" id="MF_01815">
    <property type="entry name" value="FabH"/>
    <property type="match status" value="1"/>
</dbReference>
<dbReference type="InterPro" id="IPR013747">
    <property type="entry name" value="ACP_syn_III_C"/>
</dbReference>
<dbReference type="InterPro" id="IPR013751">
    <property type="entry name" value="ACP_syn_III_N"/>
</dbReference>
<dbReference type="InterPro" id="IPR004655">
    <property type="entry name" value="FabH"/>
</dbReference>
<dbReference type="InterPro" id="IPR016039">
    <property type="entry name" value="Thiolase-like"/>
</dbReference>
<dbReference type="NCBIfam" id="TIGR00747">
    <property type="entry name" value="fabH"/>
    <property type="match status" value="1"/>
</dbReference>
<dbReference type="NCBIfam" id="NF006829">
    <property type="entry name" value="PRK09352.1"/>
    <property type="match status" value="1"/>
</dbReference>
<dbReference type="PANTHER" id="PTHR43091">
    <property type="entry name" value="3-OXOACYL-[ACYL-CARRIER-PROTEIN] SYNTHASE"/>
    <property type="match status" value="1"/>
</dbReference>
<dbReference type="PANTHER" id="PTHR43091:SF1">
    <property type="entry name" value="BETA-KETOACYL-[ACYL-CARRIER-PROTEIN] SYNTHASE III, CHLOROPLASTIC"/>
    <property type="match status" value="1"/>
</dbReference>
<dbReference type="Pfam" id="PF08545">
    <property type="entry name" value="ACP_syn_III"/>
    <property type="match status" value="1"/>
</dbReference>
<dbReference type="Pfam" id="PF08541">
    <property type="entry name" value="ACP_syn_III_C"/>
    <property type="match status" value="1"/>
</dbReference>
<dbReference type="SUPFAM" id="SSF53901">
    <property type="entry name" value="Thiolase-like"/>
    <property type="match status" value="1"/>
</dbReference>
<sequence>MIRSVVRGFGAALPKRVMTNRDMEQVVDTSDDWIVQRTGIRQRYIAGEGETTASLGEQAARAALANAGLTADDLDMIIVATSTPDNTFPATAVNIQNRLGMHHGFAFDVQAVCSGFVYAVTTADAYIRGGVAKRVLVIGAETFSRILDWTDRTTCVLFGDGAGALILEAGEGTGANTDRGVLTASLRSDGAHKDKLYVDGGPSSTGTVGVLHMAGREVFKHAVGMITDVIEATFKAADVTADDLDWLVPHQANRRIIDGSAKKLGIAPEKVVVTVDLHGNTSAASIPLALAVAAGDGRIKRGDLVMLEAMGGGFTWGAVLLRW</sequence>
<organism>
    <name type="scientific">Rhizobium rhizogenes (strain K84 / ATCC BAA-868)</name>
    <name type="common">Agrobacterium radiobacter</name>
    <dbReference type="NCBI Taxonomy" id="311403"/>
    <lineage>
        <taxon>Bacteria</taxon>
        <taxon>Pseudomonadati</taxon>
        <taxon>Pseudomonadota</taxon>
        <taxon>Alphaproteobacteria</taxon>
        <taxon>Hyphomicrobiales</taxon>
        <taxon>Rhizobiaceae</taxon>
        <taxon>Rhizobium/Agrobacterium group</taxon>
        <taxon>Rhizobium</taxon>
    </lineage>
</organism>
<comment type="function">
    <text evidence="1">Catalyzes the condensation reaction of fatty acid synthesis by the addition to an acyl acceptor of two carbons from malonyl-ACP. Catalyzes the first condensation reaction which initiates fatty acid synthesis and may therefore play a role in governing the total rate of fatty acid production. Possesses both acetoacetyl-ACP synthase and acetyl transacylase activities. Its substrate specificity determines the biosynthesis of branched-chain and/or straight-chain of fatty acids.</text>
</comment>
<comment type="catalytic activity">
    <reaction evidence="1">
        <text>malonyl-[ACP] + acetyl-CoA + H(+) = 3-oxobutanoyl-[ACP] + CO2 + CoA</text>
        <dbReference type="Rhea" id="RHEA:12080"/>
        <dbReference type="Rhea" id="RHEA-COMP:9623"/>
        <dbReference type="Rhea" id="RHEA-COMP:9625"/>
        <dbReference type="ChEBI" id="CHEBI:15378"/>
        <dbReference type="ChEBI" id="CHEBI:16526"/>
        <dbReference type="ChEBI" id="CHEBI:57287"/>
        <dbReference type="ChEBI" id="CHEBI:57288"/>
        <dbReference type="ChEBI" id="CHEBI:78449"/>
        <dbReference type="ChEBI" id="CHEBI:78450"/>
        <dbReference type="EC" id="2.3.1.180"/>
    </reaction>
</comment>
<comment type="pathway">
    <text evidence="1">Lipid metabolism; fatty acid biosynthesis.</text>
</comment>
<comment type="subunit">
    <text evidence="1">Homodimer.</text>
</comment>
<comment type="subcellular location">
    <subcellularLocation>
        <location evidence="1">Cytoplasm</location>
    </subcellularLocation>
</comment>
<comment type="domain">
    <text evidence="1">The last Arg residue of the ACP-binding site is essential for the weak association between ACP/AcpP and FabH.</text>
</comment>
<comment type="similarity">
    <text evidence="1">Belongs to the thiolase-like superfamily. FabH family.</text>
</comment>
<proteinExistence type="inferred from homology"/>
<accession>B9JCY9</accession>
<reference key="1">
    <citation type="journal article" date="2009" name="J. Bacteriol.">
        <title>Genome sequences of three Agrobacterium biovars help elucidate the evolution of multichromosome genomes in bacteria.</title>
        <authorList>
            <person name="Slater S.C."/>
            <person name="Goldman B.S."/>
            <person name="Goodner B."/>
            <person name="Setubal J.C."/>
            <person name="Farrand S.K."/>
            <person name="Nester E.W."/>
            <person name="Burr T.J."/>
            <person name="Banta L."/>
            <person name="Dickerman A.W."/>
            <person name="Paulsen I."/>
            <person name="Otten L."/>
            <person name="Suen G."/>
            <person name="Welch R."/>
            <person name="Almeida N.F."/>
            <person name="Arnold F."/>
            <person name="Burton O.T."/>
            <person name="Du Z."/>
            <person name="Ewing A."/>
            <person name="Godsy E."/>
            <person name="Heisel S."/>
            <person name="Houmiel K.L."/>
            <person name="Jhaveri J."/>
            <person name="Lu J."/>
            <person name="Miller N.M."/>
            <person name="Norton S."/>
            <person name="Chen Q."/>
            <person name="Phoolcharoen W."/>
            <person name="Ohlin V."/>
            <person name="Ondrusek D."/>
            <person name="Pride N."/>
            <person name="Stricklin S.L."/>
            <person name="Sun J."/>
            <person name="Wheeler C."/>
            <person name="Wilson L."/>
            <person name="Zhu H."/>
            <person name="Wood D.W."/>
        </authorList>
    </citation>
    <scope>NUCLEOTIDE SEQUENCE [LARGE SCALE GENOMIC DNA]</scope>
    <source>
        <strain>K84 / ATCC BAA-868</strain>
    </source>
</reference>
<evidence type="ECO:0000255" key="1">
    <source>
        <dbReference type="HAMAP-Rule" id="MF_01815"/>
    </source>
</evidence>
<name>FABH_RHIR8</name>
<feature type="chain" id="PRO_1000187838" description="Beta-ketoacyl-[acyl-carrier-protein] synthase III">
    <location>
        <begin position="1"/>
        <end position="323"/>
    </location>
</feature>
<feature type="region of interest" description="ACP-binding" evidence="1">
    <location>
        <begin position="251"/>
        <end position="255"/>
    </location>
</feature>
<feature type="active site" evidence="1">
    <location>
        <position position="113"/>
    </location>
</feature>
<feature type="active site" evidence="1">
    <location>
        <position position="250"/>
    </location>
</feature>
<feature type="active site" evidence="1">
    <location>
        <position position="280"/>
    </location>
</feature>
<protein>
    <recommendedName>
        <fullName evidence="1">Beta-ketoacyl-[acyl-carrier-protein] synthase III</fullName>
        <shortName evidence="1">Beta-ketoacyl-ACP synthase III</shortName>
        <shortName evidence="1">KAS III</shortName>
        <ecNumber evidence="1">2.3.1.180</ecNumber>
    </recommendedName>
    <alternativeName>
        <fullName evidence="1">3-oxoacyl-[acyl-carrier-protein] synthase 3</fullName>
    </alternativeName>
    <alternativeName>
        <fullName evidence="1">3-oxoacyl-[acyl-carrier-protein] synthase III</fullName>
    </alternativeName>
</protein>
<gene>
    <name evidence="1" type="primary">fabH</name>
    <name type="ordered locus">Arad_1772</name>
</gene>
<keyword id="KW-0012">Acyltransferase</keyword>
<keyword id="KW-0963">Cytoplasm</keyword>
<keyword id="KW-0275">Fatty acid biosynthesis</keyword>
<keyword id="KW-0276">Fatty acid metabolism</keyword>
<keyword id="KW-0444">Lipid biosynthesis</keyword>
<keyword id="KW-0443">Lipid metabolism</keyword>
<keyword id="KW-0511">Multifunctional enzyme</keyword>
<keyword id="KW-0808">Transferase</keyword>